<sequence>MSWQRPDGRTAAQLRPISFQRHFTRYAPGSVLVKFGDTHVLCTASVAEEVPPFLQNTGQGWLTAEYRMLPTATQQRQPRETLKVSGRTAEIQRLIGRSLRAALDFHKLGSRTITVDADVLQADGSTRTAAITGGYVALHDAITWLYKQGLLDPAQGSPLRQQVAALSVGIVRGEVLVDLCYEEDSQAEVDMNIVMNEQGALIEIQGTAEAGCFDRSQLLQMLDMAQAGIQELLRAQRETLNL</sequence>
<organism>
    <name type="scientific">Synechococcus sp. (strain JA-3-3Ab)</name>
    <name type="common">Cyanobacteria bacterium Yellowstone A-Prime</name>
    <dbReference type="NCBI Taxonomy" id="321327"/>
    <lineage>
        <taxon>Bacteria</taxon>
        <taxon>Bacillati</taxon>
        <taxon>Cyanobacteriota</taxon>
        <taxon>Cyanophyceae</taxon>
        <taxon>Synechococcales</taxon>
        <taxon>Synechococcaceae</taxon>
        <taxon>Synechococcus</taxon>
    </lineage>
</organism>
<comment type="function">
    <text evidence="1">Phosphorolytic 3'-5' exoribonuclease that plays an important role in tRNA 3'-end maturation. Removes nucleotide residues following the 3'-CCA terminus of tRNAs; can also add nucleotides to the ends of RNA molecules by using nucleoside diphosphates as substrates, but this may not be physiologically important. Probably plays a role in initiation of 16S rRNA degradation (leading to ribosome degradation) during starvation.</text>
</comment>
<comment type="catalytic activity">
    <reaction evidence="1">
        <text>tRNA(n+1) + phosphate = tRNA(n) + a ribonucleoside 5'-diphosphate</text>
        <dbReference type="Rhea" id="RHEA:10628"/>
        <dbReference type="Rhea" id="RHEA-COMP:17343"/>
        <dbReference type="Rhea" id="RHEA-COMP:17344"/>
        <dbReference type="ChEBI" id="CHEBI:43474"/>
        <dbReference type="ChEBI" id="CHEBI:57930"/>
        <dbReference type="ChEBI" id="CHEBI:173114"/>
        <dbReference type="EC" id="2.7.7.56"/>
    </reaction>
</comment>
<comment type="subunit">
    <text evidence="1">Homohexameric ring arranged as a trimer of dimers.</text>
</comment>
<comment type="similarity">
    <text evidence="1">Belongs to the RNase PH family.</text>
</comment>
<dbReference type="EC" id="2.7.7.56" evidence="1"/>
<dbReference type="EMBL" id="CP000239">
    <property type="protein sequence ID" value="ABD00755.1"/>
    <property type="molecule type" value="Genomic_DNA"/>
</dbReference>
<dbReference type="RefSeq" id="WP_011431427.1">
    <property type="nucleotide sequence ID" value="NC_007775.1"/>
</dbReference>
<dbReference type="SMR" id="Q2JRJ9"/>
<dbReference type="STRING" id="321327.CYA_2643"/>
<dbReference type="KEGG" id="cya:CYA_2643"/>
<dbReference type="eggNOG" id="COG0689">
    <property type="taxonomic scope" value="Bacteria"/>
</dbReference>
<dbReference type="HOGENOM" id="CLU_050858_0_0_3"/>
<dbReference type="OrthoDB" id="9802265at2"/>
<dbReference type="Proteomes" id="UP000008818">
    <property type="component" value="Chromosome"/>
</dbReference>
<dbReference type="GO" id="GO:0000175">
    <property type="term" value="F:3'-5'-RNA exonuclease activity"/>
    <property type="evidence" value="ECO:0007669"/>
    <property type="project" value="UniProtKB-UniRule"/>
</dbReference>
<dbReference type="GO" id="GO:0000049">
    <property type="term" value="F:tRNA binding"/>
    <property type="evidence" value="ECO:0007669"/>
    <property type="project" value="UniProtKB-UniRule"/>
</dbReference>
<dbReference type="GO" id="GO:0009022">
    <property type="term" value="F:tRNA nucleotidyltransferase activity"/>
    <property type="evidence" value="ECO:0007669"/>
    <property type="project" value="UniProtKB-UniRule"/>
</dbReference>
<dbReference type="GO" id="GO:0016075">
    <property type="term" value="P:rRNA catabolic process"/>
    <property type="evidence" value="ECO:0007669"/>
    <property type="project" value="UniProtKB-UniRule"/>
</dbReference>
<dbReference type="GO" id="GO:0006364">
    <property type="term" value="P:rRNA processing"/>
    <property type="evidence" value="ECO:0007669"/>
    <property type="project" value="UniProtKB-KW"/>
</dbReference>
<dbReference type="GO" id="GO:0008033">
    <property type="term" value="P:tRNA processing"/>
    <property type="evidence" value="ECO:0007669"/>
    <property type="project" value="UniProtKB-UniRule"/>
</dbReference>
<dbReference type="CDD" id="cd11362">
    <property type="entry name" value="RNase_PH_bact"/>
    <property type="match status" value="1"/>
</dbReference>
<dbReference type="FunFam" id="3.30.230.70:FF:000003">
    <property type="entry name" value="Ribonuclease PH"/>
    <property type="match status" value="1"/>
</dbReference>
<dbReference type="Gene3D" id="3.30.230.70">
    <property type="entry name" value="GHMP Kinase, N-terminal domain"/>
    <property type="match status" value="1"/>
</dbReference>
<dbReference type="HAMAP" id="MF_00564">
    <property type="entry name" value="RNase_PH"/>
    <property type="match status" value="1"/>
</dbReference>
<dbReference type="InterPro" id="IPR001247">
    <property type="entry name" value="ExoRNase_PH_dom1"/>
</dbReference>
<dbReference type="InterPro" id="IPR015847">
    <property type="entry name" value="ExoRNase_PH_dom2"/>
</dbReference>
<dbReference type="InterPro" id="IPR036345">
    <property type="entry name" value="ExoRNase_PH_dom2_sf"/>
</dbReference>
<dbReference type="InterPro" id="IPR027408">
    <property type="entry name" value="PNPase/RNase_PH_dom_sf"/>
</dbReference>
<dbReference type="InterPro" id="IPR020568">
    <property type="entry name" value="Ribosomal_Su5_D2-typ_SF"/>
</dbReference>
<dbReference type="InterPro" id="IPR050080">
    <property type="entry name" value="RNase_PH"/>
</dbReference>
<dbReference type="InterPro" id="IPR002381">
    <property type="entry name" value="RNase_PH_bac-type"/>
</dbReference>
<dbReference type="InterPro" id="IPR018336">
    <property type="entry name" value="RNase_PH_CS"/>
</dbReference>
<dbReference type="NCBIfam" id="TIGR01966">
    <property type="entry name" value="RNasePH"/>
    <property type="match status" value="1"/>
</dbReference>
<dbReference type="PANTHER" id="PTHR11953">
    <property type="entry name" value="EXOSOME COMPLEX COMPONENT"/>
    <property type="match status" value="1"/>
</dbReference>
<dbReference type="PANTHER" id="PTHR11953:SF0">
    <property type="entry name" value="EXOSOME COMPLEX COMPONENT RRP41"/>
    <property type="match status" value="1"/>
</dbReference>
<dbReference type="Pfam" id="PF01138">
    <property type="entry name" value="RNase_PH"/>
    <property type="match status" value="1"/>
</dbReference>
<dbReference type="Pfam" id="PF03725">
    <property type="entry name" value="RNase_PH_C"/>
    <property type="match status" value="1"/>
</dbReference>
<dbReference type="SUPFAM" id="SSF55666">
    <property type="entry name" value="Ribonuclease PH domain 2-like"/>
    <property type="match status" value="1"/>
</dbReference>
<dbReference type="SUPFAM" id="SSF54211">
    <property type="entry name" value="Ribosomal protein S5 domain 2-like"/>
    <property type="match status" value="1"/>
</dbReference>
<dbReference type="PROSITE" id="PS01277">
    <property type="entry name" value="RIBONUCLEASE_PH"/>
    <property type="match status" value="1"/>
</dbReference>
<evidence type="ECO:0000255" key="1">
    <source>
        <dbReference type="HAMAP-Rule" id="MF_00564"/>
    </source>
</evidence>
<gene>
    <name evidence="1" type="primary">rph</name>
    <name type="ordered locus">CYA_2643</name>
</gene>
<keyword id="KW-0548">Nucleotidyltransferase</keyword>
<keyword id="KW-0694">RNA-binding</keyword>
<keyword id="KW-0698">rRNA processing</keyword>
<keyword id="KW-0808">Transferase</keyword>
<keyword id="KW-0819">tRNA processing</keyword>
<keyword id="KW-0820">tRNA-binding</keyword>
<reference key="1">
    <citation type="journal article" date="2007" name="ISME J.">
        <title>Population level functional diversity in a microbial community revealed by comparative genomic and metagenomic analyses.</title>
        <authorList>
            <person name="Bhaya D."/>
            <person name="Grossman A.R."/>
            <person name="Steunou A.-S."/>
            <person name="Khuri N."/>
            <person name="Cohan F.M."/>
            <person name="Hamamura N."/>
            <person name="Melendrez M.C."/>
            <person name="Bateson M.M."/>
            <person name="Ward D.M."/>
            <person name="Heidelberg J.F."/>
        </authorList>
    </citation>
    <scope>NUCLEOTIDE SEQUENCE [LARGE SCALE GENOMIC DNA]</scope>
    <source>
        <strain>JA-3-3Ab</strain>
    </source>
</reference>
<protein>
    <recommendedName>
        <fullName evidence="1">Ribonuclease PH</fullName>
        <shortName evidence="1">RNase PH</shortName>
        <ecNumber evidence="1">2.7.7.56</ecNumber>
    </recommendedName>
    <alternativeName>
        <fullName evidence="1">tRNA nucleotidyltransferase</fullName>
    </alternativeName>
</protein>
<accession>Q2JRJ9</accession>
<proteinExistence type="inferred from homology"/>
<name>RNPH_SYNJA</name>
<feature type="chain" id="PRO_1000129380" description="Ribonuclease PH">
    <location>
        <begin position="1"/>
        <end position="242"/>
    </location>
</feature>
<feature type="binding site" evidence="1">
    <location>
        <position position="87"/>
    </location>
    <ligand>
        <name>phosphate</name>
        <dbReference type="ChEBI" id="CHEBI:43474"/>
        <note>substrate</note>
    </ligand>
</feature>
<feature type="binding site" evidence="1">
    <location>
        <begin position="125"/>
        <end position="127"/>
    </location>
    <ligand>
        <name>phosphate</name>
        <dbReference type="ChEBI" id="CHEBI:43474"/>
        <note>substrate</note>
    </ligand>
</feature>